<reference key="1">
    <citation type="journal article" date="1994" name="J. Biol. Chem.">
        <title>cDNA sequence, gene structure, and in vitro expression of ace-1, the gene encoding acetylcholinesterase of class A in the nematode Caenorhabditis elegans.</title>
        <authorList>
            <person name="Arpagaus M."/>
            <person name="Fedon Y."/>
            <person name="Cousin X."/>
            <person name="Chatonnet A."/>
            <person name="Berge J.-B."/>
            <person name="Fournier D."/>
            <person name="Toutant J.-P."/>
        </authorList>
    </citation>
    <scope>NUCLEOTIDE SEQUENCE [MRNA]</scope>
    <scope>FUNCTION</scope>
    <scope>CATALYTIC ACTIVITY</scope>
    <scope>BIOPHYSICOCHEMICAL PROPERTIES</scope>
    <source>
        <strain>Bristol N2</strain>
    </source>
</reference>
<reference key="2">
    <citation type="journal article" date="1998" name="Science">
        <title>Genome sequence of the nematode C. elegans: a platform for investigating biology.</title>
        <authorList>
            <consortium name="The C. elegans sequencing consortium"/>
        </authorList>
    </citation>
    <scope>NUCLEOTIDE SEQUENCE [LARGE SCALE GENOMIC DNA]</scope>
    <source>
        <strain>Bristol N2</strain>
    </source>
</reference>
<reference key="3">
    <citation type="journal article" date="2007" name="Mol. Cell. Proteomics">
        <title>Proteomics reveals N-linked glycoprotein diversity in Caenorhabditis elegans and suggests an atypical translocation mechanism for integral membrane proteins.</title>
        <authorList>
            <person name="Kaji H."/>
            <person name="Kamiie J."/>
            <person name="Kawakami H."/>
            <person name="Kido K."/>
            <person name="Yamauchi Y."/>
            <person name="Shinkawa T."/>
            <person name="Taoka M."/>
            <person name="Takahashi N."/>
            <person name="Isobe T."/>
        </authorList>
    </citation>
    <scope>GLYCOSYLATION [LARGE SCALE ANALYSIS] AT ASN-74 AND ASN-486</scope>
    <scope>IDENTIFICATION BY MASS SPECTROMETRY</scope>
    <source>
        <strain>Bristol N2</strain>
    </source>
</reference>
<accession>P38433</accession>
<dbReference type="EC" id="3.1.1.7" evidence="8"/>
<dbReference type="EMBL" id="X75331">
    <property type="protein sequence ID" value="CAA53080.1"/>
    <property type="molecule type" value="mRNA"/>
</dbReference>
<dbReference type="EMBL" id="FO081067">
    <property type="protein sequence ID" value="CCD68912.1"/>
    <property type="molecule type" value="Genomic_DNA"/>
</dbReference>
<dbReference type="PIR" id="A54413">
    <property type="entry name" value="A54413"/>
</dbReference>
<dbReference type="PIR" id="T29347">
    <property type="entry name" value="T29347"/>
</dbReference>
<dbReference type="RefSeq" id="NP_510660.1">
    <property type="nucleotide sequence ID" value="NM_078259.9"/>
</dbReference>
<dbReference type="SMR" id="P38433"/>
<dbReference type="BioGRID" id="46591">
    <property type="interactions" value="1"/>
</dbReference>
<dbReference type="FunCoup" id="P38433">
    <property type="interactions" value="180"/>
</dbReference>
<dbReference type="STRING" id="6239.W09B12.1.2"/>
<dbReference type="ChEMBL" id="CHEMBL3341583"/>
<dbReference type="ESTHER" id="caeel-ACHE1">
    <property type="family name" value="ACHE"/>
</dbReference>
<dbReference type="MEROPS" id="S09.979"/>
<dbReference type="GlyCosmos" id="P38433">
    <property type="glycosylation" value="4 sites, No reported glycans"/>
</dbReference>
<dbReference type="iPTMnet" id="P38433"/>
<dbReference type="PaxDb" id="6239-W09B12.1.2"/>
<dbReference type="PeptideAtlas" id="P38433"/>
<dbReference type="EnsemblMetazoa" id="W09B12.1.1">
    <property type="protein sequence ID" value="W09B12.1.1"/>
    <property type="gene ID" value="WBGene00000035"/>
</dbReference>
<dbReference type="GeneID" id="181706"/>
<dbReference type="KEGG" id="cel:CELE_W09B12.1"/>
<dbReference type="UCSC" id="W09B12.1.1">
    <property type="organism name" value="c. elegans"/>
</dbReference>
<dbReference type="AGR" id="WB:WBGene00000035"/>
<dbReference type="CTD" id="181706"/>
<dbReference type="WormBase" id="W09B12.1">
    <property type="protein sequence ID" value="CE07569"/>
    <property type="gene ID" value="WBGene00000035"/>
    <property type="gene designation" value="ace-1"/>
</dbReference>
<dbReference type="eggNOG" id="KOG4389">
    <property type="taxonomic scope" value="Eukaryota"/>
</dbReference>
<dbReference type="GeneTree" id="ENSGT00940000159300"/>
<dbReference type="HOGENOM" id="CLU_006586_13_0_1"/>
<dbReference type="InParanoid" id="P38433"/>
<dbReference type="OMA" id="TCSVNEM"/>
<dbReference type="OrthoDB" id="19653at2759"/>
<dbReference type="PhylomeDB" id="P38433"/>
<dbReference type="Reactome" id="R-CEL-112311">
    <property type="pathway name" value="Neurotransmitter clearance"/>
</dbReference>
<dbReference type="Reactome" id="R-CEL-1483191">
    <property type="pathway name" value="Synthesis of PC"/>
</dbReference>
<dbReference type="Reactome" id="R-CEL-9749641">
    <property type="pathway name" value="Aspirin ADME"/>
</dbReference>
<dbReference type="PRO" id="PR:P38433"/>
<dbReference type="Proteomes" id="UP000001940">
    <property type="component" value="Chromosome X"/>
</dbReference>
<dbReference type="Bgee" id="WBGene00000035">
    <property type="expression patterns" value="Expressed in larva and 3 other cell types or tissues"/>
</dbReference>
<dbReference type="GO" id="GO:0005615">
    <property type="term" value="C:extracellular space"/>
    <property type="evidence" value="ECO:0000314"/>
    <property type="project" value="WormBase"/>
</dbReference>
<dbReference type="GO" id="GO:0005886">
    <property type="term" value="C:plasma membrane"/>
    <property type="evidence" value="ECO:0000318"/>
    <property type="project" value="GO_Central"/>
</dbReference>
<dbReference type="GO" id="GO:0045202">
    <property type="term" value="C:synapse"/>
    <property type="evidence" value="ECO:0007669"/>
    <property type="project" value="UniProtKB-SubCell"/>
</dbReference>
<dbReference type="GO" id="GO:0043083">
    <property type="term" value="C:synaptic cleft"/>
    <property type="evidence" value="ECO:0007669"/>
    <property type="project" value="GOC"/>
</dbReference>
<dbReference type="GO" id="GO:0003990">
    <property type="term" value="F:acetylcholinesterase activity"/>
    <property type="evidence" value="ECO:0000314"/>
    <property type="project" value="WormBase"/>
</dbReference>
<dbReference type="GO" id="GO:0042802">
    <property type="term" value="F:identical protein binding"/>
    <property type="evidence" value="ECO:0000353"/>
    <property type="project" value="WormBase"/>
</dbReference>
<dbReference type="GO" id="GO:0006581">
    <property type="term" value="P:acetylcholine catabolic process"/>
    <property type="evidence" value="ECO:0000314"/>
    <property type="project" value="WormBase"/>
</dbReference>
<dbReference type="GO" id="GO:0001507">
    <property type="term" value="P:acetylcholine catabolic process in synaptic cleft"/>
    <property type="evidence" value="ECO:0000305"/>
    <property type="project" value="WormBase"/>
</dbReference>
<dbReference type="GO" id="GO:0019695">
    <property type="term" value="P:choline metabolic process"/>
    <property type="evidence" value="ECO:0000318"/>
    <property type="project" value="GO_Central"/>
</dbReference>
<dbReference type="GO" id="GO:0040012">
    <property type="term" value="P:regulation of locomotion"/>
    <property type="evidence" value="ECO:0000316"/>
    <property type="project" value="WormBase"/>
</dbReference>
<dbReference type="CDD" id="cd00312">
    <property type="entry name" value="Esterase_lipase"/>
    <property type="match status" value="1"/>
</dbReference>
<dbReference type="FunFam" id="3.40.50.1820:FF:000476">
    <property type="entry name" value="Carboxylic ester hydrolase"/>
    <property type="match status" value="1"/>
</dbReference>
<dbReference type="Gene3D" id="3.40.50.1820">
    <property type="entry name" value="alpha/beta hydrolase"/>
    <property type="match status" value="1"/>
</dbReference>
<dbReference type="InterPro" id="IPR029058">
    <property type="entry name" value="AB_hydrolase_fold"/>
</dbReference>
<dbReference type="InterPro" id="IPR050654">
    <property type="entry name" value="AChE-related_enzymes"/>
</dbReference>
<dbReference type="InterPro" id="IPR002018">
    <property type="entry name" value="CarbesteraseB"/>
</dbReference>
<dbReference type="InterPro" id="IPR019826">
    <property type="entry name" value="Carboxylesterase_B_AS"/>
</dbReference>
<dbReference type="InterPro" id="IPR019819">
    <property type="entry name" value="Carboxylesterase_B_CS"/>
</dbReference>
<dbReference type="InterPro" id="IPR000997">
    <property type="entry name" value="Cholinesterase"/>
</dbReference>
<dbReference type="PANTHER" id="PTHR43918">
    <property type="entry name" value="ACETYLCHOLINESTERASE"/>
    <property type="match status" value="1"/>
</dbReference>
<dbReference type="PANTHER" id="PTHR43918:SF12">
    <property type="entry name" value="ACETYLCHOLINESTERASE 1"/>
    <property type="match status" value="1"/>
</dbReference>
<dbReference type="Pfam" id="PF00135">
    <property type="entry name" value="COesterase"/>
    <property type="match status" value="1"/>
</dbReference>
<dbReference type="PRINTS" id="PR00878">
    <property type="entry name" value="CHOLNESTRASE"/>
</dbReference>
<dbReference type="SUPFAM" id="SSF53474">
    <property type="entry name" value="alpha/beta-Hydrolases"/>
    <property type="match status" value="1"/>
</dbReference>
<dbReference type="PROSITE" id="PS00122">
    <property type="entry name" value="CARBOXYLESTERASE_B_1"/>
    <property type="match status" value="1"/>
</dbReference>
<dbReference type="PROSITE" id="PS00941">
    <property type="entry name" value="CARBOXYLESTERASE_B_2"/>
    <property type="match status" value="1"/>
</dbReference>
<feature type="signal peptide" evidence="2">
    <location>
        <begin position="1"/>
        <end position="31"/>
    </location>
</feature>
<feature type="chain" id="PRO_0000008610" description="Acetylcholinesterase 1">
    <location>
        <begin position="32"/>
        <end position="620"/>
    </location>
</feature>
<feature type="active site" description="Acyl-ester intermediate" evidence="3">
    <location>
        <position position="216"/>
    </location>
</feature>
<feature type="active site" description="Charge relay system" evidence="1">
    <location>
        <position position="346"/>
    </location>
</feature>
<feature type="active site" description="Charge relay system" evidence="1">
    <location>
        <position position="468"/>
    </location>
</feature>
<feature type="glycosylation site" description="N-linked (GlcNAc...) asparagine" evidence="4">
    <location>
        <position position="74"/>
    </location>
</feature>
<feature type="glycosylation site" description="N-linked (GlcNAc...) asparagine" evidence="2">
    <location>
        <position position="272"/>
    </location>
</feature>
<feature type="glycosylation site" description="N-linked (GlcNAc...) asparagine" evidence="4">
    <location>
        <position position="486"/>
    </location>
</feature>
<feature type="glycosylation site" description="N-linked (GlcNAc...) asparagine" evidence="2">
    <location>
        <position position="536"/>
    </location>
</feature>
<feature type="disulfide bond" evidence="1">
    <location>
        <begin position="82"/>
        <end position="109"/>
    </location>
</feature>
<feature type="disulfide bond" evidence="1">
    <location>
        <begin position="270"/>
        <end position="286"/>
    </location>
</feature>
<feature type="disulfide bond" evidence="1">
    <location>
        <begin position="430"/>
        <end position="558"/>
    </location>
</feature>
<feature type="disulfide bond" description="Interchain" evidence="1">
    <location>
        <position position="618"/>
    </location>
</feature>
<evidence type="ECO:0000250" key="1"/>
<evidence type="ECO:0000255" key="2"/>
<evidence type="ECO:0000255" key="3">
    <source>
        <dbReference type="PROSITE-ProRule" id="PRU10039"/>
    </source>
</evidence>
<evidence type="ECO:0000269" key="4">
    <source>
    </source>
</evidence>
<evidence type="ECO:0000269" key="5">
    <source>
    </source>
</evidence>
<evidence type="ECO:0000303" key="6">
    <source>
    </source>
</evidence>
<evidence type="ECO:0000305" key="7"/>
<evidence type="ECO:0000305" key="8">
    <source>
    </source>
</evidence>
<keyword id="KW-1003">Cell membrane</keyword>
<keyword id="KW-1015">Disulfide bond</keyword>
<keyword id="KW-0325">Glycoprotein</keyword>
<keyword id="KW-0378">Hydrolase</keyword>
<keyword id="KW-0472">Membrane</keyword>
<keyword id="KW-0531">Neurotransmitter degradation</keyword>
<keyword id="KW-1185">Reference proteome</keyword>
<keyword id="KW-0964">Secreted</keyword>
<keyword id="KW-0719">Serine esterase</keyword>
<keyword id="KW-0732">Signal</keyword>
<keyword id="KW-0770">Synapse</keyword>
<organism>
    <name type="scientific">Caenorhabditis elegans</name>
    <dbReference type="NCBI Taxonomy" id="6239"/>
    <lineage>
        <taxon>Eukaryota</taxon>
        <taxon>Metazoa</taxon>
        <taxon>Ecdysozoa</taxon>
        <taxon>Nematoda</taxon>
        <taxon>Chromadorea</taxon>
        <taxon>Rhabditida</taxon>
        <taxon>Rhabditina</taxon>
        <taxon>Rhabditomorpha</taxon>
        <taxon>Rhabditoidea</taxon>
        <taxon>Rhabditidae</taxon>
        <taxon>Peloderinae</taxon>
        <taxon>Caenorhabditis</taxon>
    </lineage>
</organism>
<sequence length="620" mass="71433">MRNSLLFFIFLPSTILAVDLIHLHDGSPLFGEEVLSQTGKPLTRFQGIPFAEPPVGNLRFKKPKPKQPWRIPLNATTPPNSCIQSEDTYFGDFYGSTMWNANTKLSEDCLYLNVYVPGKVDPNKKLAVMVWVYGGGFWSGTATLDVYDGRILTVEENVILVAMNYRVSIFGFLYMNRPEAPGNMGMWDQLLAMKWVHKNIDLFGGDLSRITLFGESAGAASVSIHMLSPKSAPYFHRAIIQSGSATSPWAIEPRDVALARAVILYNAMKCGNMSLINPDYDRILDCFQRADADALRENEWAPVREFGDFPWVPVVDGDFLLENAQTSLKQGNFKKTQLLAGSNRDESIYFLTYQLPDIFPVADFFTKTDFIKDRQLWIKGVKDLLPRQILKCQLTLAAVLHEYEPQDLPVTPRDWINAMDKMLGDYHFTCSVNEMALAHTKHGGDTYYYYFTHRASQQTWPEWMGVLHGYEINFIFGEPLNQKRFNYTDEERELSNRFMRYWANFAKTGDPNKNEDGSFTQDVWPKYNSVSMEYMNMTVESSYPSMKRIGHGPRRKECAFWKAYLPNLMAAVADVGDPYLVWKQQMDKWQNEYITDWQYHFEQYKRYQTYRQSDSETCGG</sequence>
<comment type="function">
    <text evidence="8">Rapidly hydrolyzes acetylcholine and releases choline into the synapse (Probable). It can hydrolyze propionylcholine and butyrylthiocholine in vitro (Probable).</text>
</comment>
<comment type="catalytic activity">
    <reaction evidence="8">
        <text>acetylcholine + H2O = choline + acetate + H(+)</text>
        <dbReference type="Rhea" id="RHEA:17561"/>
        <dbReference type="ChEBI" id="CHEBI:15354"/>
        <dbReference type="ChEBI" id="CHEBI:15355"/>
        <dbReference type="ChEBI" id="CHEBI:15377"/>
        <dbReference type="ChEBI" id="CHEBI:15378"/>
        <dbReference type="ChEBI" id="CHEBI:30089"/>
        <dbReference type="EC" id="3.1.1.7"/>
    </reaction>
    <physiologicalReaction direction="left-to-right" evidence="8">
        <dbReference type="Rhea" id="RHEA:17562"/>
    </physiologicalReaction>
</comment>
<comment type="biophysicochemical properties">
    <kinetics>
        <KM evidence="5">57 uM for acetylthiocholine</KM>
    </kinetics>
</comment>
<comment type="subunit">
    <text evidence="1">Oligomer composed of disulfide-linked homodimers.</text>
</comment>
<comment type="subcellular location">
    <subcellularLocation>
        <location evidence="1">Synapse</location>
    </subcellularLocation>
    <subcellularLocation>
        <location evidence="1">Secreted</location>
    </subcellularLocation>
    <subcellularLocation>
        <location evidence="1">Cell membrane</location>
        <topology evidence="1">Peripheral membrane protein</topology>
    </subcellularLocation>
    <text>May be secreted or membrane associated via a non-catalytic subunit.</text>
</comment>
<comment type="developmental stage">
    <text>Detected at all stages. Found to be more abundant in larval stages than in embryos or adults.</text>
</comment>
<comment type="similarity">
    <text evidence="7">Belongs to the type-B carboxylesterase/lipase family.</text>
</comment>
<gene>
    <name type="primary">ace-1</name>
    <name type="ORF">W09B12.1</name>
</gene>
<proteinExistence type="evidence at protein level"/>
<protein>
    <recommendedName>
        <fullName>Acetylcholinesterase 1</fullName>
        <shortName evidence="6">ACE-1</shortName>
        <shortName>AChE 1</shortName>
        <ecNumber evidence="8">3.1.1.7</ecNumber>
    </recommendedName>
</protein>
<name>ACE1_CAEEL</name>